<organism>
    <name type="scientific">Rosa acicularis</name>
    <name type="common">Prickly rose</name>
    <dbReference type="NCBI Taxonomy" id="117260"/>
    <lineage>
        <taxon>Eukaryota</taxon>
        <taxon>Viridiplantae</taxon>
        <taxon>Streptophyta</taxon>
        <taxon>Embryophyta</taxon>
        <taxon>Tracheophyta</taxon>
        <taxon>Spermatophyta</taxon>
        <taxon>Magnoliopsida</taxon>
        <taxon>eudicotyledons</taxon>
        <taxon>Gunneridae</taxon>
        <taxon>Pentapetalae</taxon>
        <taxon>rosids</taxon>
        <taxon>fabids</taxon>
        <taxon>Rosales</taxon>
        <taxon>Rosaceae</taxon>
        <taxon>Rosoideae</taxon>
        <taxon>Rosoideae incertae sedis</taxon>
        <taxon>Rosa</taxon>
    </lineage>
</organism>
<geneLocation type="chloroplast"/>
<comment type="function">
    <text evidence="1">Usually encoded in the trnK tRNA gene intron. Probably assists in splicing its own and other chloroplast group II introns.</text>
</comment>
<comment type="subcellular location">
    <subcellularLocation>
        <location>Plastid</location>
        <location>Chloroplast</location>
    </subcellularLocation>
</comment>
<comment type="similarity">
    <text evidence="1">Belongs to the intron maturase 2 family. MatK subfamily.</text>
</comment>
<name>MATK_ROSAC</name>
<evidence type="ECO:0000255" key="1">
    <source>
        <dbReference type="HAMAP-Rule" id="MF_01390"/>
    </source>
</evidence>
<feature type="chain" id="PRO_0000143684" description="Maturase K">
    <location>
        <begin position="1"/>
        <end position="503"/>
    </location>
</feature>
<gene>
    <name evidence="1" type="primary">matK</name>
</gene>
<keyword id="KW-0150">Chloroplast</keyword>
<keyword id="KW-0507">mRNA processing</keyword>
<keyword id="KW-0934">Plastid</keyword>
<keyword id="KW-0694">RNA-binding</keyword>
<keyword id="KW-0819">tRNA processing</keyword>
<sequence length="503" mass="59678">MEEFQGYLELYRSQQHDFLYPLIFREYIYALAHDRGLNRSVLLDNVGYDKKSSLLIIKRLISRMYQQNHFLISVNDSNQNKFFGYNKNLYSQMISEGFAVIVEIPFSLRLVSSLKETETVKSYNLRSIHSIFPFFEDKFPHLNYASDVLIPYPIHLEILVQTLRYCVKDPSSLHLLRLFLHEYYNWNTLITPKKSIFAKSNQRLFLLLYNSYVCEYESILLFLRNQSNHLRLTSSGILFERIRFYEKIKYPVKEVFANDFPATLWFFKDPFIQYVRYQGKSILASKDTPLLMNKWKYYLVHFWQCHFYVWSQPGRIHINQLSKHSFDFLGYLSSIRPNISVVRSQLLENSFLMDNAMKKLDTLFPIIPMIGSLAKVKFCNTSGHPISKSSWADSSDSDIIDRFVRIGGNLSHYYSGSSKKKSLYRIKYILRLSCVKTLARKHKSTVRTFLKRLGPKLLDEFFTEEEQIFSLLFPRTSSTLKRFYRGRIWYLDILCINDLVNHE</sequence>
<dbReference type="EMBL" id="AB039294">
    <property type="protein sequence ID" value="BAB33101.1"/>
    <property type="molecule type" value="Genomic_DNA"/>
</dbReference>
<dbReference type="GO" id="GO:0009507">
    <property type="term" value="C:chloroplast"/>
    <property type="evidence" value="ECO:0007669"/>
    <property type="project" value="UniProtKB-SubCell"/>
</dbReference>
<dbReference type="GO" id="GO:0003723">
    <property type="term" value="F:RNA binding"/>
    <property type="evidence" value="ECO:0007669"/>
    <property type="project" value="UniProtKB-KW"/>
</dbReference>
<dbReference type="GO" id="GO:0006397">
    <property type="term" value="P:mRNA processing"/>
    <property type="evidence" value="ECO:0007669"/>
    <property type="project" value="UniProtKB-KW"/>
</dbReference>
<dbReference type="GO" id="GO:0008380">
    <property type="term" value="P:RNA splicing"/>
    <property type="evidence" value="ECO:0007669"/>
    <property type="project" value="UniProtKB-UniRule"/>
</dbReference>
<dbReference type="GO" id="GO:0008033">
    <property type="term" value="P:tRNA processing"/>
    <property type="evidence" value="ECO:0007669"/>
    <property type="project" value="UniProtKB-KW"/>
</dbReference>
<dbReference type="HAMAP" id="MF_01390">
    <property type="entry name" value="MatK"/>
    <property type="match status" value="1"/>
</dbReference>
<dbReference type="InterPro" id="IPR024937">
    <property type="entry name" value="Domain_X"/>
</dbReference>
<dbReference type="InterPro" id="IPR002866">
    <property type="entry name" value="Maturase_MatK"/>
</dbReference>
<dbReference type="InterPro" id="IPR024942">
    <property type="entry name" value="Maturase_MatK_N"/>
</dbReference>
<dbReference type="PANTHER" id="PTHR34811">
    <property type="entry name" value="MATURASE K"/>
    <property type="match status" value="1"/>
</dbReference>
<dbReference type="PANTHER" id="PTHR34811:SF1">
    <property type="entry name" value="MATURASE K"/>
    <property type="match status" value="1"/>
</dbReference>
<dbReference type="Pfam" id="PF01348">
    <property type="entry name" value="Intron_maturas2"/>
    <property type="match status" value="1"/>
</dbReference>
<dbReference type="Pfam" id="PF01824">
    <property type="entry name" value="MatK_N"/>
    <property type="match status" value="1"/>
</dbReference>
<accession>Q7JD61</accession>
<proteinExistence type="inferred from homology"/>
<reference key="1">
    <citation type="submission" date="2000-02" db="EMBL/GenBank/DDBJ databases">
        <title>Phylogenetic analysis of Japanese Rosa using matK sequences.</title>
        <authorList>
            <person name="Wu S."/>
            <person name="Ueda Y."/>
            <person name="Matsumoto S."/>
            <person name="Nishihara S."/>
        </authorList>
    </citation>
    <scope>NUCLEOTIDE SEQUENCE [GENOMIC DNA]</scope>
    <source>
        <strain>2</strain>
        <tissue>Leaf</tissue>
    </source>
</reference>
<protein>
    <recommendedName>
        <fullName evidence="1">Maturase K</fullName>
    </recommendedName>
    <alternativeName>
        <fullName evidence="1">Intron maturase</fullName>
    </alternativeName>
</protein>